<keyword id="KW-0067">ATP-binding</keyword>
<keyword id="KW-0963">Cytoplasm</keyword>
<keyword id="KW-0235">DNA replication</keyword>
<keyword id="KW-0238">DNA-binding</keyword>
<keyword id="KW-0446">Lipid-binding</keyword>
<keyword id="KW-0547">Nucleotide-binding</keyword>
<protein>
    <recommendedName>
        <fullName evidence="1">Chromosomal replication initiator protein DnaA</fullName>
    </recommendedName>
</protein>
<comment type="function">
    <text evidence="1">Plays an essential role in the initiation and regulation of chromosomal replication. ATP-DnaA binds to the origin of replication (oriC) to initiate formation of the DNA replication initiation complex once per cell cycle. Binds the DnaA box (a 9 base pair repeat at the origin) and separates the double-stranded (ds)DNA. Forms a right-handed helical filament on oriC DNA; dsDNA binds to the exterior of the filament while single-stranded (ss)DNA is stabiized in the filament's interior. The ATP-DnaA-oriC complex binds and stabilizes one strand of the AT-rich DNA unwinding element (DUE), permitting loading of DNA polymerase. After initiation quickly degrades to an ADP-DnaA complex that is not apt for DNA replication. Binds acidic phospholipids.</text>
</comment>
<comment type="subunit">
    <text evidence="1">Oligomerizes as a right-handed, spiral filament on DNA at oriC.</text>
</comment>
<comment type="subcellular location">
    <subcellularLocation>
        <location evidence="1">Cytoplasm</location>
    </subcellularLocation>
</comment>
<comment type="domain">
    <text evidence="1">Domain I is involved in oligomerization and binding regulators, domain II is flexibile and of varying length in different bacteria, domain III forms the AAA+ region, while domain IV binds dsDNA.</text>
</comment>
<comment type="similarity">
    <text evidence="1">Belongs to the DnaA family.</text>
</comment>
<dbReference type="EMBL" id="AE014291">
    <property type="protein sequence ID" value="AAN28959.1"/>
    <property type="molecule type" value="Genomic_DNA"/>
</dbReference>
<dbReference type="EMBL" id="CP002997">
    <property type="protein sequence ID" value="AEM17371.1"/>
    <property type="molecule type" value="Genomic_DNA"/>
</dbReference>
<dbReference type="SMR" id="Q8G3E7"/>
<dbReference type="KEGG" id="bms:BR0001"/>
<dbReference type="KEGG" id="bsi:BS1330_I0001"/>
<dbReference type="PATRIC" id="fig|204722.22.peg.1829"/>
<dbReference type="HOGENOM" id="CLU_026910_3_0_5"/>
<dbReference type="Proteomes" id="UP000007104">
    <property type="component" value="Chromosome I"/>
</dbReference>
<dbReference type="GO" id="GO:0005737">
    <property type="term" value="C:cytoplasm"/>
    <property type="evidence" value="ECO:0007669"/>
    <property type="project" value="UniProtKB-SubCell"/>
</dbReference>
<dbReference type="GO" id="GO:0005886">
    <property type="term" value="C:plasma membrane"/>
    <property type="evidence" value="ECO:0007669"/>
    <property type="project" value="TreeGrafter"/>
</dbReference>
<dbReference type="GO" id="GO:0005524">
    <property type="term" value="F:ATP binding"/>
    <property type="evidence" value="ECO:0007669"/>
    <property type="project" value="UniProtKB-UniRule"/>
</dbReference>
<dbReference type="GO" id="GO:0016887">
    <property type="term" value="F:ATP hydrolysis activity"/>
    <property type="evidence" value="ECO:0007669"/>
    <property type="project" value="InterPro"/>
</dbReference>
<dbReference type="GO" id="GO:0003688">
    <property type="term" value="F:DNA replication origin binding"/>
    <property type="evidence" value="ECO:0007669"/>
    <property type="project" value="UniProtKB-UniRule"/>
</dbReference>
<dbReference type="GO" id="GO:0008289">
    <property type="term" value="F:lipid binding"/>
    <property type="evidence" value="ECO:0007669"/>
    <property type="project" value="UniProtKB-KW"/>
</dbReference>
<dbReference type="GO" id="GO:0006270">
    <property type="term" value="P:DNA replication initiation"/>
    <property type="evidence" value="ECO:0007669"/>
    <property type="project" value="UniProtKB-UniRule"/>
</dbReference>
<dbReference type="GO" id="GO:0006275">
    <property type="term" value="P:regulation of DNA replication"/>
    <property type="evidence" value="ECO:0007669"/>
    <property type="project" value="UniProtKB-UniRule"/>
</dbReference>
<dbReference type="CDD" id="cd06571">
    <property type="entry name" value="Bac_DnaA_C"/>
    <property type="match status" value="1"/>
</dbReference>
<dbReference type="FunFam" id="1.10.1750.10:FF:000002">
    <property type="entry name" value="Chromosomal replication initiator protein DnaA"/>
    <property type="match status" value="1"/>
</dbReference>
<dbReference type="Gene3D" id="1.10.1750.10">
    <property type="match status" value="1"/>
</dbReference>
<dbReference type="Gene3D" id="1.10.8.60">
    <property type="match status" value="1"/>
</dbReference>
<dbReference type="Gene3D" id="3.30.300.180">
    <property type="match status" value="1"/>
</dbReference>
<dbReference type="Gene3D" id="3.40.50.300">
    <property type="entry name" value="P-loop containing nucleotide triphosphate hydrolases"/>
    <property type="match status" value="1"/>
</dbReference>
<dbReference type="HAMAP" id="MF_00377">
    <property type="entry name" value="DnaA_bact"/>
    <property type="match status" value="1"/>
</dbReference>
<dbReference type="InterPro" id="IPR003593">
    <property type="entry name" value="AAA+_ATPase"/>
</dbReference>
<dbReference type="InterPro" id="IPR001957">
    <property type="entry name" value="Chromosome_initiator_DnaA"/>
</dbReference>
<dbReference type="InterPro" id="IPR020591">
    <property type="entry name" value="Chromosome_initiator_DnaA-like"/>
</dbReference>
<dbReference type="InterPro" id="IPR018312">
    <property type="entry name" value="Chromosome_initiator_DnaA_CS"/>
</dbReference>
<dbReference type="InterPro" id="IPR013159">
    <property type="entry name" value="DnaA_C"/>
</dbReference>
<dbReference type="InterPro" id="IPR013317">
    <property type="entry name" value="DnaA_dom"/>
</dbReference>
<dbReference type="InterPro" id="IPR024633">
    <property type="entry name" value="DnaA_N_dom"/>
</dbReference>
<dbReference type="InterPro" id="IPR038454">
    <property type="entry name" value="DnaA_N_sf"/>
</dbReference>
<dbReference type="InterPro" id="IPR027417">
    <property type="entry name" value="P-loop_NTPase"/>
</dbReference>
<dbReference type="InterPro" id="IPR010921">
    <property type="entry name" value="Trp_repressor/repl_initiator"/>
</dbReference>
<dbReference type="NCBIfam" id="TIGR00362">
    <property type="entry name" value="DnaA"/>
    <property type="match status" value="1"/>
</dbReference>
<dbReference type="PANTHER" id="PTHR30050">
    <property type="entry name" value="CHROMOSOMAL REPLICATION INITIATOR PROTEIN DNAA"/>
    <property type="match status" value="1"/>
</dbReference>
<dbReference type="PANTHER" id="PTHR30050:SF2">
    <property type="entry name" value="CHROMOSOMAL REPLICATION INITIATOR PROTEIN DNAA"/>
    <property type="match status" value="1"/>
</dbReference>
<dbReference type="Pfam" id="PF00308">
    <property type="entry name" value="Bac_DnaA"/>
    <property type="match status" value="1"/>
</dbReference>
<dbReference type="Pfam" id="PF08299">
    <property type="entry name" value="Bac_DnaA_C"/>
    <property type="match status" value="1"/>
</dbReference>
<dbReference type="Pfam" id="PF11638">
    <property type="entry name" value="DnaA_N"/>
    <property type="match status" value="1"/>
</dbReference>
<dbReference type="PRINTS" id="PR00051">
    <property type="entry name" value="DNAA"/>
</dbReference>
<dbReference type="SMART" id="SM00382">
    <property type="entry name" value="AAA"/>
    <property type="match status" value="1"/>
</dbReference>
<dbReference type="SMART" id="SM00760">
    <property type="entry name" value="Bac_DnaA_C"/>
    <property type="match status" value="1"/>
</dbReference>
<dbReference type="SUPFAM" id="SSF52540">
    <property type="entry name" value="P-loop containing nucleoside triphosphate hydrolases"/>
    <property type="match status" value="1"/>
</dbReference>
<dbReference type="SUPFAM" id="SSF48295">
    <property type="entry name" value="TrpR-like"/>
    <property type="match status" value="1"/>
</dbReference>
<dbReference type="PROSITE" id="PS01008">
    <property type="entry name" value="DNAA"/>
    <property type="match status" value="1"/>
</dbReference>
<proteinExistence type="inferred from homology"/>
<sequence length="496" mass="55179">MKMDSAVSEEAFERLTAKLKARVGGEIYSSWFGRLKLDDISKSIVRLSVPTAFLRSWINNHYSELLTELWQEENPQILKVEVVVRGVSRVVRSAAPAETCDNAEAKPAVTPREKMVFPVGQSFGGQSLGEKRGSAVVAESAAATDAVLGSPLDPRYTFDTFVDGASNRVALAAARTIAEAGSSAVRFNPLFIHASVGLGKTHLLQAIAAAALQRQEKARVVYLTAEYFMWRFATAIRDNNALSFKEQLRDIDLLVIDDMQFLQGKSIQHEFCHLLNTLLDSAKQVVVAADRAPSELESLDVRVRSRLQGGVALEVAAPDYEMRLEMLRRRLASAQCEDASLDIGEEILAHVARTVTGSGRELEGAFNQLLFRQSFEPNISIDRVDELLGHLTRAGEPKRIRIEEIQRIVARHYNVSKQDLLSNRRTRTIVKPRQVAMYLAKMMTPRSLPEIGRRFGGRDHTTVLHAVRKIEDLVGADTKLAQELELLKRLINDQAA</sequence>
<accession>Q8G3E7</accession>
<accession>G0KAH4</accession>
<name>DNAA_BRUSU</name>
<reference key="1">
    <citation type="journal article" date="2002" name="Proc. Natl. Acad. Sci. U.S.A.">
        <title>The Brucella suis genome reveals fundamental similarities between animal and plant pathogens and symbionts.</title>
        <authorList>
            <person name="Paulsen I.T."/>
            <person name="Seshadri R."/>
            <person name="Nelson K.E."/>
            <person name="Eisen J.A."/>
            <person name="Heidelberg J.F."/>
            <person name="Read T.D."/>
            <person name="Dodson R.J."/>
            <person name="Umayam L.A."/>
            <person name="Brinkac L.M."/>
            <person name="Beanan M.J."/>
            <person name="Daugherty S.C."/>
            <person name="DeBoy R.T."/>
            <person name="Durkin A.S."/>
            <person name="Kolonay J.F."/>
            <person name="Madupu R."/>
            <person name="Nelson W.C."/>
            <person name="Ayodeji B."/>
            <person name="Kraul M."/>
            <person name="Shetty J."/>
            <person name="Malek J.A."/>
            <person name="Van Aken S.E."/>
            <person name="Riedmuller S."/>
            <person name="Tettelin H."/>
            <person name="Gill S.R."/>
            <person name="White O."/>
            <person name="Salzberg S.L."/>
            <person name="Hoover D.L."/>
            <person name="Lindler L.E."/>
            <person name="Halling S.M."/>
            <person name="Boyle S.M."/>
            <person name="Fraser C.M."/>
        </authorList>
    </citation>
    <scope>NUCLEOTIDE SEQUENCE [LARGE SCALE GENOMIC DNA]</scope>
    <source>
        <strain>1330</strain>
    </source>
</reference>
<reference key="2">
    <citation type="journal article" date="2011" name="J. Bacteriol.">
        <title>Revised genome sequence of Brucella suis 1330.</title>
        <authorList>
            <person name="Tae H."/>
            <person name="Shallom S."/>
            <person name="Settlage R."/>
            <person name="Preston D."/>
            <person name="Adams L.G."/>
            <person name="Garner H.R."/>
        </authorList>
    </citation>
    <scope>NUCLEOTIDE SEQUENCE [LARGE SCALE GENOMIC DNA]</scope>
    <source>
        <strain>1330</strain>
    </source>
</reference>
<organism>
    <name type="scientific">Brucella suis biovar 1 (strain 1330)</name>
    <dbReference type="NCBI Taxonomy" id="204722"/>
    <lineage>
        <taxon>Bacteria</taxon>
        <taxon>Pseudomonadati</taxon>
        <taxon>Pseudomonadota</taxon>
        <taxon>Alphaproteobacteria</taxon>
        <taxon>Hyphomicrobiales</taxon>
        <taxon>Brucellaceae</taxon>
        <taxon>Brucella/Ochrobactrum group</taxon>
        <taxon>Brucella</taxon>
    </lineage>
</organism>
<evidence type="ECO:0000255" key="1">
    <source>
        <dbReference type="HAMAP-Rule" id="MF_00377"/>
    </source>
</evidence>
<gene>
    <name evidence="1" type="primary">dnaA</name>
    <name type="ordered locus">BR0001</name>
    <name type="ordered locus">BS1330_I0001</name>
</gene>
<feature type="chain" id="PRO_0000114147" description="Chromosomal replication initiator protein DnaA">
    <location>
        <begin position="1"/>
        <end position="496"/>
    </location>
</feature>
<feature type="region of interest" description="Domain I, interacts with DnaA modulators" evidence="1">
    <location>
        <begin position="1"/>
        <end position="76"/>
    </location>
</feature>
<feature type="region of interest" description="Domain II" evidence="1">
    <location>
        <begin position="76"/>
        <end position="150"/>
    </location>
</feature>
<feature type="region of interest" description="Domain III, AAA+ region" evidence="1">
    <location>
        <begin position="151"/>
        <end position="373"/>
    </location>
</feature>
<feature type="region of interest" description="Domain IV, binds dsDNA" evidence="1">
    <location>
        <begin position="374"/>
        <end position="496"/>
    </location>
</feature>
<feature type="binding site" evidence="1">
    <location>
        <position position="197"/>
    </location>
    <ligand>
        <name>ATP</name>
        <dbReference type="ChEBI" id="CHEBI:30616"/>
    </ligand>
</feature>
<feature type="binding site" evidence="1">
    <location>
        <position position="199"/>
    </location>
    <ligand>
        <name>ATP</name>
        <dbReference type="ChEBI" id="CHEBI:30616"/>
    </ligand>
</feature>
<feature type="binding site" evidence="1">
    <location>
        <position position="200"/>
    </location>
    <ligand>
        <name>ATP</name>
        <dbReference type="ChEBI" id="CHEBI:30616"/>
    </ligand>
</feature>
<feature type="binding site" evidence="1">
    <location>
        <position position="201"/>
    </location>
    <ligand>
        <name>ATP</name>
        <dbReference type="ChEBI" id="CHEBI:30616"/>
    </ligand>
</feature>